<protein>
    <recommendedName>
        <fullName>Nucleolar protein 12</fullName>
    </recommendedName>
</protein>
<keyword id="KW-0175">Coiled coil</keyword>
<keyword id="KW-0539">Nucleus</keyword>
<keyword id="KW-1185">Reference proteome</keyword>
<keyword id="KW-0694">RNA-binding</keyword>
<keyword id="KW-0699">rRNA-binding</keyword>
<dbReference type="EMBL" id="BC049449">
    <property type="protein sequence ID" value="AAH49449.1"/>
    <property type="molecule type" value="mRNA"/>
</dbReference>
<dbReference type="RefSeq" id="NP_956584.1">
    <property type="nucleotide sequence ID" value="NM_200290.1"/>
</dbReference>
<dbReference type="SMR" id="Q7ZWE7"/>
<dbReference type="FunCoup" id="Q7ZWE7">
    <property type="interactions" value="255"/>
</dbReference>
<dbReference type="STRING" id="7955.ENSDARP00000123934"/>
<dbReference type="PaxDb" id="7955-ENSDARP00000123934"/>
<dbReference type="Ensembl" id="ENSDART00000148524">
    <property type="protein sequence ID" value="ENSDARP00000123934"/>
    <property type="gene ID" value="ENSDARG00000038027"/>
</dbReference>
<dbReference type="GeneID" id="393260"/>
<dbReference type="KEGG" id="dre:393260"/>
<dbReference type="AGR" id="ZFIN:ZDB-GENE-040426-1035"/>
<dbReference type="CTD" id="79159"/>
<dbReference type="ZFIN" id="ZDB-GENE-040426-1035">
    <property type="gene designation" value="nol12"/>
</dbReference>
<dbReference type="eggNOG" id="KOG4709">
    <property type="taxonomic scope" value="Eukaryota"/>
</dbReference>
<dbReference type="HOGENOM" id="CLU_111183_0_0_1"/>
<dbReference type="InParanoid" id="Q7ZWE7"/>
<dbReference type="OMA" id="LHMHSRK"/>
<dbReference type="OrthoDB" id="551633at2759"/>
<dbReference type="PhylomeDB" id="Q7ZWE7"/>
<dbReference type="TreeFam" id="TF323855"/>
<dbReference type="PRO" id="PR:Q7ZWE7"/>
<dbReference type="Proteomes" id="UP000000437">
    <property type="component" value="Chromosome 3"/>
</dbReference>
<dbReference type="Bgee" id="ENSDARG00000038027">
    <property type="expression patterns" value="Expressed in tail and 22 other cell types or tissues"/>
</dbReference>
<dbReference type="GO" id="GO:0005730">
    <property type="term" value="C:nucleolus"/>
    <property type="evidence" value="ECO:0000318"/>
    <property type="project" value="GO_Central"/>
</dbReference>
<dbReference type="GO" id="GO:0019843">
    <property type="term" value="F:rRNA binding"/>
    <property type="evidence" value="ECO:0000318"/>
    <property type="project" value="GO_Central"/>
</dbReference>
<dbReference type="InterPro" id="IPR019186">
    <property type="entry name" value="Nucleolar_protein_12"/>
</dbReference>
<dbReference type="PANTHER" id="PTHR14577">
    <property type="entry name" value="NUCLEOLAR PROTEIN 12"/>
    <property type="match status" value="1"/>
</dbReference>
<dbReference type="PANTHER" id="PTHR14577:SF0">
    <property type="entry name" value="NUCLEOLAR PROTEIN 12"/>
    <property type="match status" value="1"/>
</dbReference>
<dbReference type="Pfam" id="PF09805">
    <property type="entry name" value="Nop25"/>
    <property type="match status" value="1"/>
</dbReference>
<comment type="function">
    <text evidence="1">May bind to rRNA.</text>
</comment>
<comment type="subcellular location">
    <subcellularLocation>
        <location evidence="1">Nucleus</location>
        <location evidence="1">Nucleolus</location>
    </subcellularLocation>
</comment>
<comment type="similarity">
    <text evidence="4">Belongs to the RRP17 family.</text>
</comment>
<feature type="chain" id="PRO_0000271211" description="Nucleolar protein 12">
    <location>
        <begin position="1"/>
        <end position="228"/>
    </location>
</feature>
<feature type="region of interest" description="Disordered" evidence="3">
    <location>
        <begin position="1"/>
        <end position="22"/>
    </location>
</feature>
<feature type="region of interest" description="Disordered" evidence="3">
    <location>
        <begin position="126"/>
        <end position="228"/>
    </location>
</feature>
<feature type="coiled-coil region" evidence="2">
    <location>
        <begin position="40"/>
        <end position="103"/>
    </location>
</feature>
<feature type="compositionally biased region" description="Basic and acidic residues" evidence="3">
    <location>
        <begin position="126"/>
        <end position="145"/>
    </location>
</feature>
<feature type="compositionally biased region" description="Polar residues" evidence="3">
    <location>
        <begin position="158"/>
        <end position="170"/>
    </location>
</feature>
<feature type="compositionally biased region" description="Basic residues" evidence="3">
    <location>
        <begin position="171"/>
        <end position="180"/>
    </location>
</feature>
<feature type="compositionally biased region" description="Basic and acidic residues" evidence="3">
    <location>
        <begin position="181"/>
        <end position="195"/>
    </location>
</feature>
<feature type="compositionally biased region" description="Basic residues" evidence="3">
    <location>
        <begin position="204"/>
        <end position="220"/>
    </location>
</feature>
<proteinExistence type="evidence at transcript level"/>
<organism>
    <name type="scientific">Danio rerio</name>
    <name type="common">Zebrafish</name>
    <name type="synonym">Brachydanio rerio</name>
    <dbReference type="NCBI Taxonomy" id="7955"/>
    <lineage>
        <taxon>Eukaryota</taxon>
        <taxon>Metazoa</taxon>
        <taxon>Chordata</taxon>
        <taxon>Craniata</taxon>
        <taxon>Vertebrata</taxon>
        <taxon>Euteleostomi</taxon>
        <taxon>Actinopterygii</taxon>
        <taxon>Neopterygii</taxon>
        <taxon>Teleostei</taxon>
        <taxon>Ostariophysi</taxon>
        <taxon>Cypriniformes</taxon>
        <taxon>Danionidae</taxon>
        <taxon>Danioninae</taxon>
        <taxon>Danio</taxon>
    </lineage>
</organism>
<name>NOL12_DANRE</name>
<reference key="1">
    <citation type="submission" date="2003-03" db="EMBL/GenBank/DDBJ databases">
        <authorList>
            <consortium name="NIH - Zebrafish Gene Collection (ZGC) project"/>
        </authorList>
    </citation>
    <scope>NUCLEOTIDE SEQUENCE [LARGE SCALE MRNA]</scope>
    <source>
        <strain>SJD</strain>
    </source>
</reference>
<evidence type="ECO:0000250" key="1"/>
<evidence type="ECO:0000255" key="2"/>
<evidence type="ECO:0000256" key="3">
    <source>
        <dbReference type="SAM" id="MobiDB-lite"/>
    </source>
</evidence>
<evidence type="ECO:0000305" key="4"/>
<sequence>MGKSDRLQQGSKGKGGGKRKHGKCVLMFDDKDRQDFLTGFHKRKLERRRAALEEMKSKLKEEQKRLREERHKEYLKMLQERRQALDEADELEEAITATTECVQYDHPNHTVTVTTISDLDLSADRLLEPAQRDGGDGEERERTEALPKQAGNPLLSKKIQSLTASLNSLVKQKKRRKQKRRQEAKQRSHQSDRKSSSSAFVHNNKQKQGKSTKRQRRRQTGRNERSQD</sequence>
<gene>
    <name type="primary">nol12</name>
    <name type="ORF">zgc:56457</name>
</gene>
<accession>Q7ZWE7</accession>